<proteinExistence type="predicted"/>
<sequence length="21" mass="2391">MLISGTAFLRLRTNRKAFPTP</sequence>
<name>LPRM_CORDP</name>
<comment type="function">
    <text>Involved in erythromycin resistance.</text>
</comment>
<accession>P21232</accession>
<dbReference type="EMBL" id="M36726">
    <property type="protein sequence ID" value="AAA98483.1"/>
    <property type="molecule type" value="Genomic_DNA"/>
</dbReference>
<dbReference type="GO" id="GO:0046677">
    <property type="term" value="P:response to antibiotic"/>
    <property type="evidence" value="ECO:0007669"/>
    <property type="project" value="UniProtKB-KW"/>
</dbReference>
<dbReference type="InterPro" id="IPR012558">
    <property type="entry name" value="Emycin-R_leader_pep1"/>
</dbReference>
<dbReference type="Pfam" id="PF08051">
    <property type="entry name" value="Ery_res_leader1"/>
    <property type="match status" value="1"/>
</dbReference>
<feature type="peptide" id="PRO_0000044003" description="23S rRNA methylase leader peptide">
    <location>
        <begin position="1"/>
        <end position="21"/>
    </location>
</feature>
<organism>
    <name type="scientific">Corynebacterium diphtheriae</name>
    <dbReference type="NCBI Taxonomy" id="1717"/>
    <lineage>
        <taxon>Bacteria</taxon>
        <taxon>Bacillati</taxon>
        <taxon>Actinomycetota</taxon>
        <taxon>Actinomycetes</taxon>
        <taxon>Mycobacteriales</taxon>
        <taxon>Corynebacteriaceae</taxon>
        <taxon>Corynebacterium</taxon>
    </lineage>
</organism>
<keyword id="KW-0046">Antibiotic resistance</keyword>
<keyword id="KW-0428">Leader peptide</keyword>
<keyword id="KW-0614">Plasmid</keyword>
<protein>
    <recommendedName>
        <fullName>23S rRNA methylase leader peptide</fullName>
    </recommendedName>
    <alternativeName>
        <fullName>Erythromycin resistance leader peptide</fullName>
    </alternativeName>
</protein>
<reference key="1">
    <citation type="journal article" date="1988" name="FEMS Microbiol. Lett.">
        <title>Identification of a methylase gene for erythromycin resistance within the sequence of a spontaneously deleting fragment of Corynebacterium diphtheriae plasmid pNG2.</title>
        <authorList>
            <person name="Serwold-Davis T.M."/>
            <person name="Groman N.B."/>
        </authorList>
    </citation>
    <scope>NUCLEOTIDE SEQUENCE [GENOMIC DNA]</scope>
</reference>
<geneLocation type="plasmid">
    <name>pNG2</name>
</geneLocation>